<proteinExistence type="inferred from homology"/>
<gene>
    <name evidence="2" type="primary">trmB</name>
    <name type="ordered locus">APL_1383</name>
</gene>
<comment type="function">
    <text evidence="2">Catalyzes the formation of N(7)-methylguanine at position 46 (m7G46) in tRNA.</text>
</comment>
<comment type="catalytic activity">
    <reaction evidence="2">
        <text>guanosine(46) in tRNA + S-adenosyl-L-methionine = N(7)-methylguanosine(46) in tRNA + S-adenosyl-L-homocysteine</text>
        <dbReference type="Rhea" id="RHEA:42708"/>
        <dbReference type="Rhea" id="RHEA-COMP:10188"/>
        <dbReference type="Rhea" id="RHEA-COMP:10189"/>
        <dbReference type="ChEBI" id="CHEBI:57856"/>
        <dbReference type="ChEBI" id="CHEBI:59789"/>
        <dbReference type="ChEBI" id="CHEBI:74269"/>
        <dbReference type="ChEBI" id="CHEBI:74480"/>
        <dbReference type="EC" id="2.1.1.33"/>
    </reaction>
</comment>
<comment type="pathway">
    <text evidence="2">tRNA modification; N(7)-methylguanine-tRNA biosynthesis.</text>
</comment>
<comment type="similarity">
    <text evidence="2">Belongs to the class I-like SAM-binding methyltransferase superfamily. TrmB family.</text>
</comment>
<accession>A3N231</accession>
<feature type="chain" id="PRO_1000064384" description="tRNA (guanine-N(7)-)-methyltransferase">
    <location>
        <begin position="1"/>
        <end position="250"/>
    </location>
</feature>
<feature type="active site" evidence="1">
    <location>
        <position position="154"/>
    </location>
</feature>
<feature type="binding site" evidence="2">
    <location>
        <position position="79"/>
    </location>
    <ligand>
        <name>S-adenosyl-L-methionine</name>
        <dbReference type="ChEBI" id="CHEBI:59789"/>
    </ligand>
</feature>
<feature type="binding site" evidence="2">
    <location>
        <position position="104"/>
    </location>
    <ligand>
        <name>S-adenosyl-L-methionine</name>
        <dbReference type="ChEBI" id="CHEBI:59789"/>
    </ligand>
</feature>
<feature type="binding site" evidence="2">
    <location>
        <position position="131"/>
    </location>
    <ligand>
        <name>S-adenosyl-L-methionine</name>
        <dbReference type="ChEBI" id="CHEBI:59789"/>
    </ligand>
</feature>
<feature type="binding site" evidence="2">
    <location>
        <position position="154"/>
    </location>
    <ligand>
        <name>S-adenosyl-L-methionine</name>
        <dbReference type="ChEBI" id="CHEBI:59789"/>
    </ligand>
</feature>
<feature type="binding site" evidence="2">
    <location>
        <position position="158"/>
    </location>
    <ligand>
        <name>substrate</name>
    </ligand>
</feature>
<feature type="binding site" evidence="2">
    <location>
        <position position="190"/>
    </location>
    <ligand>
        <name>substrate</name>
    </ligand>
</feature>
<feature type="binding site" evidence="2">
    <location>
        <begin position="228"/>
        <end position="231"/>
    </location>
    <ligand>
        <name>substrate</name>
    </ligand>
</feature>
<sequence length="250" mass="29025">MSEKQTFADKKRKTVEQAEFTEDGRYLRKVRSFVLRTGRLSDYQRDMMNNNWANLGLDYQNTPFNFEQIFGNNNPVVLEIGFGMGRSLVEMAKQNPDRNYIGIEVHTPGVGACIAYALEKGVKNLRVICHDATEILRDAIADGSLGGLQLYFPDPWQKAKHHKRRIVQPEFITRVLTKLGDNGFIHFATDWENYAEHMLEVLRQFDKELRNTSATNDFIPRPDFRPLTKFEERAHRLGHGVWDLYFVKQA</sequence>
<organism>
    <name type="scientific">Actinobacillus pleuropneumoniae serotype 5b (strain L20)</name>
    <dbReference type="NCBI Taxonomy" id="416269"/>
    <lineage>
        <taxon>Bacteria</taxon>
        <taxon>Pseudomonadati</taxon>
        <taxon>Pseudomonadota</taxon>
        <taxon>Gammaproteobacteria</taxon>
        <taxon>Pasteurellales</taxon>
        <taxon>Pasteurellaceae</taxon>
        <taxon>Actinobacillus</taxon>
    </lineage>
</organism>
<keyword id="KW-0489">Methyltransferase</keyword>
<keyword id="KW-1185">Reference proteome</keyword>
<keyword id="KW-0949">S-adenosyl-L-methionine</keyword>
<keyword id="KW-0808">Transferase</keyword>
<keyword id="KW-0819">tRNA processing</keyword>
<evidence type="ECO:0000250" key="1"/>
<evidence type="ECO:0000255" key="2">
    <source>
        <dbReference type="HAMAP-Rule" id="MF_01057"/>
    </source>
</evidence>
<protein>
    <recommendedName>
        <fullName evidence="2">tRNA (guanine-N(7)-)-methyltransferase</fullName>
        <ecNumber evidence="2">2.1.1.33</ecNumber>
    </recommendedName>
    <alternativeName>
        <fullName evidence="2">tRNA (guanine(46)-N(7))-methyltransferase</fullName>
    </alternativeName>
    <alternativeName>
        <fullName evidence="2">tRNA(m7G46)-methyltransferase</fullName>
    </alternativeName>
</protein>
<name>TRMB_ACTP2</name>
<dbReference type="EC" id="2.1.1.33" evidence="2"/>
<dbReference type="EMBL" id="CP000569">
    <property type="protein sequence ID" value="ABN74467.1"/>
    <property type="molecule type" value="Genomic_DNA"/>
</dbReference>
<dbReference type="RefSeq" id="WP_009875455.1">
    <property type="nucleotide sequence ID" value="NC_009053.1"/>
</dbReference>
<dbReference type="SMR" id="A3N231"/>
<dbReference type="STRING" id="416269.APL_1383"/>
<dbReference type="EnsemblBacteria" id="ABN74467">
    <property type="protein sequence ID" value="ABN74467"/>
    <property type="gene ID" value="APL_1383"/>
</dbReference>
<dbReference type="KEGG" id="apl:APL_1383"/>
<dbReference type="PATRIC" id="fig|416269.6.peg.1441"/>
<dbReference type="eggNOG" id="COG0220">
    <property type="taxonomic scope" value="Bacteria"/>
</dbReference>
<dbReference type="HOGENOM" id="CLU_050910_0_1_6"/>
<dbReference type="UniPathway" id="UPA00989"/>
<dbReference type="Proteomes" id="UP000001432">
    <property type="component" value="Chromosome"/>
</dbReference>
<dbReference type="GO" id="GO:0043527">
    <property type="term" value="C:tRNA methyltransferase complex"/>
    <property type="evidence" value="ECO:0007669"/>
    <property type="project" value="TreeGrafter"/>
</dbReference>
<dbReference type="GO" id="GO:0008176">
    <property type="term" value="F:tRNA (guanine(46)-N7)-methyltransferase activity"/>
    <property type="evidence" value="ECO:0007669"/>
    <property type="project" value="UniProtKB-UniRule"/>
</dbReference>
<dbReference type="CDD" id="cd02440">
    <property type="entry name" value="AdoMet_MTases"/>
    <property type="match status" value="1"/>
</dbReference>
<dbReference type="FunFam" id="3.40.50.150:FF:000035">
    <property type="entry name" value="tRNA (guanine-N(7)-)-methyltransferase"/>
    <property type="match status" value="1"/>
</dbReference>
<dbReference type="Gene3D" id="3.40.50.150">
    <property type="entry name" value="Vaccinia Virus protein VP39"/>
    <property type="match status" value="1"/>
</dbReference>
<dbReference type="HAMAP" id="MF_01057">
    <property type="entry name" value="tRNA_methyltr_TrmB"/>
    <property type="match status" value="1"/>
</dbReference>
<dbReference type="InterPro" id="IPR029063">
    <property type="entry name" value="SAM-dependent_MTases_sf"/>
</dbReference>
<dbReference type="InterPro" id="IPR003358">
    <property type="entry name" value="tRNA_(Gua-N-7)_MeTrfase_Trmb"/>
</dbReference>
<dbReference type="InterPro" id="IPR055361">
    <property type="entry name" value="tRNA_methyltr_TrmB_bact"/>
</dbReference>
<dbReference type="NCBIfam" id="TIGR00091">
    <property type="entry name" value="tRNA (guanosine(46)-N7)-methyltransferase TrmB"/>
    <property type="match status" value="1"/>
</dbReference>
<dbReference type="PANTHER" id="PTHR23417">
    <property type="entry name" value="3-DEOXY-D-MANNO-OCTULOSONIC-ACID TRANSFERASE/TRNA GUANINE-N 7 - -METHYLTRANSFERASE"/>
    <property type="match status" value="1"/>
</dbReference>
<dbReference type="PANTHER" id="PTHR23417:SF14">
    <property type="entry name" value="PENTACOTRIPEPTIDE-REPEAT REGION OF PRORP DOMAIN-CONTAINING PROTEIN"/>
    <property type="match status" value="1"/>
</dbReference>
<dbReference type="Pfam" id="PF02390">
    <property type="entry name" value="Methyltransf_4"/>
    <property type="match status" value="1"/>
</dbReference>
<dbReference type="SUPFAM" id="SSF53335">
    <property type="entry name" value="S-adenosyl-L-methionine-dependent methyltransferases"/>
    <property type="match status" value="1"/>
</dbReference>
<dbReference type="PROSITE" id="PS51625">
    <property type="entry name" value="SAM_MT_TRMB"/>
    <property type="match status" value="1"/>
</dbReference>
<reference key="1">
    <citation type="journal article" date="2008" name="J. Bacteriol.">
        <title>The complete genome sequence of Actinobacillus pleuropneumoniae L20 (serotype 5b).</title>
        <authorList>
            <person name="Foote S.J."/>
            <person name="Bosse J.T."/>
            <person name="Bouevitch A.B."/>
            <person name="Langford P.R."/>
            <person name="Young N.M."/>
            <person name="Nash J.H.E."/>
        </authorList>
    </citation>
    <scope>NUCLEOTIDE SEQUENCE [LARGE SCALE GENOMIC DNA]</scope>
    <source>
        <strain>L20</strain>
    </source>
</reference>